<keyword id="KW-0963">Cytoplasm</keyword>
<keyword id="KW-0903">Direct protein sequencing</keyword>
<keyword id="KW-0520">NAD</keyword>
<keyword id="KW-0547">Nucleotide-binding</keyword>
<keyword id="KW-0560">Oxidoreductase</keyword>
<keyword id="KW-0749">Sporulation</keyword>
<comment type="function">
    <text evidence="3 8">Catalyzes the reversible reductive amination of pyruvate to L-alanine (Probable). A key factor in the assimilation of L-alanine as an energy source via the tricarboxylic acid cycle during sporulation (By similarity).</text>
</comment>
<comment type="catalytic activity">
    <reaction evidence="8">
        <text>L-alanine + NAD(+) + H2O = pyruvate + NH4(+) + NADH + H(+)</text>
        <dbReference type="Rhea" id="RHEA:18405"/>
        <dbReference type="ChEBI" id="CHEBI:15361"/>
        <dbReference type="ChEBI" id="CHEBI:15377"/>
        <dbReference type="ChEBI" id="CHEBI:15378"/>
        <dbReference type="ChEBI" id="CHEBI:28938"/>
        <dbReference type="ChEBI" id="CHEBI:57540"/>
        <dbReference type="ChEBI" id="CHEBI:57945"/>
        <dbReference type="ChEBI" id="CHEBI:57972"/>
        <dbReference type="EC" id="1.4.1.1"/>
    </reaction>
</comment>
<comment type="biophysicochemical properties">
    <temperatureDependence>
        <text evidence="5">Retains about 50% of its initial activity when heated at 85 degrees Celsius for 5 minutes at pH 7.2.</text>
    </temperatureDependence>
</comment>
<comment type="pathway">
    <text>Amino-acid degradation; L-alanine degradation via dehydrogenase pathway; NH(3) and pyruvate from L-alanine: step 1/1.</text>
</comment>
<comment type="subunit">
    <text evidence="5">Homohexamer.</text>
</comment>
<comment type="subcellular location">
    <subcellularLocation>
        <location evidence="2">Cytoplasm</location>
    </subcellularLocation>
</comment>
<comment type="similarity">
    <text evidence="7">Belongs to the AlaDH/PNT family.</text>
</comment>
<sequence>MKIGIPKEIKNNENRVAITPAGVMTLVKAGHEVYVETEGGAGSGFSDSEYEKAGAADRCRTWRDAWTAEMVLKVKEPLAREFRYFRPGLILFTYLHLAAAERVTKAVVEQKVVGIAYETVQLANGSLPLLTPMSEVAGRMSVQVGAQFLEKPHGGKGILLGGVPGVRRGKVTIIGGGTAGTNAAKIGVGLGADVTILDINAERLRELDDLFGDHVTTLMSNSYHIAECVRESDLVVGAVLIPGAKAKLVTEEMVRSMTPGSVLVDIAIDQGGIFETTDRVTTHDDPTYVKHGVVHYAVANMPGAVPRTSTFALTNVTIPYALQIANKGYRAGCLDNPALLKGINTLDGHIVYEAVAAAHNMPYTDVHSLLHG</sequence>
<protein>
    <recommendedName>
        <fullName evidence="6">Alanine dehydrogenase</fullName>
        <ecNumber evidence="8">1.4.1.1</ecNumber>
    </recommendedName>
</protein>
<evidence type="ECO:0000250" key="1"/>
<evidence type="ECO:0000250" key="2">
    <source>
        <dbReference type="UniProtKB" id="A0QVQ8"/>
    </source>
</evidence>
<evidence type="ECO:0000250" key="3">
    <source>
        <dbReference type="UniProtKB" id="Q08352"/>
    </source>
</evidence>
<evidence type="ECO:0000255" key="4"/>
<evidence type="ECO:0000269" key="5">
    <source>
    </source>
</evidence>
<evidence type="ECO:0000303" key="6">
    <source>
    </source>
</evidence>
<evidence type="ECO:0000305" key="7"/>
<evidence type="ECO:0000305" key="8">
    <source>
    </source>
</evidence>
<dbReference type="EC" id="1.4.1.1" evidence="8"/>
<dbReference type="EMBL" id="M33299">
    <property type="protein sequence ID" value="AAA22211.1"/>
    <property type="molecule type" value="Genomic_DNA"/>
</dbReference>
<dbReference type="PIR" id="B34261">
    <property type="entry name" value="B34261"/>
</dbReference>
<dbReference type="SMR" id="P17557"/>
<dbReference type="UniPathway" id="UPA00527">
    <property type="reaction ID" value="UER00585"/>
</dbReference>
<dbReference type="GO" id="GO:0005829">
    <property type="term" value="C:cytosol"/>
    <property type="evidence" value="ECO:0000250"/>
    <property type="project" value="UniProtKB"/>
</dbReference>
<dbReference type="GO" id="GO:0005886">
    <property type="term" value="C:plasma membrane"/>
    <property type="evidence" value="ECO:0007669"/>
    <property type="project" value="TreeGrafter"/>
</dbReference>
<dbReference type="GO" id="GO:0000286">
    <property type="term" value="F:alanine dehydrogenase activity"/>
    <property type="evidence" value="ECO:0000304"/>
    <property type="project" value="UniProtKB"/>
</dbReference>
<dbReference type="GO" id="GO:0000166">
    <property type="term" value="F:nucleotide binding"/>
    <property type="evidence" value="ECO:0007669"/>
    <property type="project" value="UniProtKB-KW"/>
</dbReference>
<dbReference type="GO" id="GO:0006524">
    <property type="term" value="P:alanine catabolic process"/>
    <property type="evidence" value="ECO:0000250"/>
    <property type="project" value="UniProtKB"/>
</dbReference>
<dbReference type="GO" id="GO:0042853">
    <property type="term" value="P:L-alanine catabolic process"/>
    <property type="evidence" value="ECO:0007669"/>
    <property type="project" value="UniProtKB-UniPathway"/>
</dbReference>
<dbReference type="GO" id="GO:0030435">
    <property type="term" value="P:sporulation resulting in formation of a cellular spore"/>
    <property type="evidence" value="ECO:0007669"/>
    <property type="project" value="UniProtKB-KW"/>
</dbReference>
<dbReference type="CDD" id="cd05305">
    <property type="entry name" value="L-AlaDH"/>
    <property type="match status" value="1"/>
</dbReference>
<dbReference type="FunFam" id="3.40.50.720:FF:000049">
    <property type="entry name" value="Alanine dehydrogenase"/>
    <property type="match status" value="1"/>
</dbReference>
<dbReference type="Gene3D" id="3.40.50.720">
    <property type="entry name" value="NAD(P)-binding Rossmann-like Domain"/>
    <property type="match status" value="2"/>
</dbReference>
<dbReference type="InterPro" id="IPR008141">
    <property type="entry name" value="Ala_DH"/>
</dbReference>
<dbReference type="InterPro" id="IPR008143">
    <property type="entry name" value="Ala_DH/PNT_CS2"/>
</dbReference>
<dbReference type="InterPro" id="IPR008142">
    <property type="entry name" value="AlaDH/PNT_CS1"/>
</dbReference>
<dbReference type="InterPro" id="IPR007886">
    <property type="entry name" value="AlaDH/PNT_N"/>
</dbReference>
<dbReference type="InterPro" id="IPR007698">
    <property type="entry name" value="AlaDH/PNT_NAD(H)-bd"/>
</dbReference>
<dbReference type="InterPro" id="IPR036291">
    <property type="entry name" value="NAD(P)-bd_dom_sf"/>
</dbReference>
<dbReference type="NCBIfam" id="TIGR00518">
    <property type="entry name" value="alaDH"/>
    <property type="match status" value="1"/>
</dbReference>
<dbReference type="PANTHER" id="PTHR42795">
    <property type="entry name" value="ALANINE DEHYDROGENASE"/>
    <property type="match status" value="1"/>
</dbReference>
<dbReference type="PANTHER" id="PTHR42795:SF1">
    <property type="entry name" value="ALANINE DEHYDROGENASE"/>
    <property type="match status" value="1"/>
</dbReference>
<dbReference type="Pfam" id="PF01262">
    <property type="entry name" value="AlaDh_PNT_C"/>
    <property type="match status" value="1"/>
</dbReference>
<dbReference type="Pfam" id="PF05222">
    <property type="entry name" value="AlaDh_PNT_N"/>
    <property type="match status" value="1"/>
</dbReference>
<dbReference type="PIRSF" id="PIRSF000183">
    <property type="entry name" value="Alanine_dh"/>
    <property type="match status" value="1"/>
</dbReference>
<dbReference type="SMART" id="SM01002">
    <property type="entry name" value="AlaDh_PNT_C"/>
    <property type="match status" value="1"/>
</dbReference>
<dbReference type="SMART" id="SM01003">
    <property type="entry name" value="AlaDh_PNT_N"/>
    <property type="match status" value="1"/>
</dbReference>
<dbReference type="SUPFAM" id="SSF52283">
    <property type="entry name" value="Formate/glycerate dehydrogenase catalytic domain-like"/>
    <property type="match status" value="1"/>
</dbReference>
<dbReference type="SUPFAM" id="SSF51735">
    <property type="entry name" value="NAD(P)-binding Rossmann-fold domains"/>
    <property type="match status" value="1"/>
</dbReference>
<dbReference type="PROSITE" id="PS00836">
    <property type="entry name" value="ALADH_PNT_1"/>
    <property type="match status" value="1"/>
</dbReference>
<dbReference type="PROSITE" id="PS00837">
    <property type="entry name" value="ALADH_PNT_2"/>
    <property type="match status" value="1"/>
</dbReference>
<proteinExistence type="evidence at protein level"/>
<reference key="1">
    <citation type="journal article" date="1990" name="Biochemistry">
        <title>Alanine dehydrogenases from two Bacillus species with distinct thermostabilities: molecular cloning, DNA and protein sequence determination, and structural comparison with other NAD(P)(+)-dependent dehydrogenases.</title>
        <authorList>
            <person name="Kuroda S."/>
            <person name="Tanizawa K."/>
            <person name="Sakamoto Y."/>
            <person name="Tanaka H."/>
            <person name="Soda K."/>
        </authorList>
    </citation>
    <scope>NUCLEOTIDE SEQUENCE [GENOMIC DNA]</scope>
    <scope>PROTEIN SEQUENCE OF 29-48; 231-245; 256-327 AND 342-372</scope>
    <scope>PROBABLE FUNCTION AS AN ALANINE DEHYDROGENASE</scope>
    <scope>BIOPHYSICOCHEMICAL PROPERTIES</scope>
    <scope>SUBUNIT</scope>
    <source>
        <strain>ATCC 12980 / DSM 22 / CCM 2062 / JCM 2501 / NBRC 12550 / NCIMB 8923 / NCTC 10339 / R-35646 / VKM B-510</strain>
    </source>
</reference>
<accession>P17557</accession>
<feature type="chain" id="PRO_0000198991" description="Alanine dehydrogenase">
    <location>
        <begin position="1"/>
        <end position="372"/>
    </location>
</feature>
<feature type="active site" description="Proton donor/acceptor" evidence="4">
    <location>
        <position position="96"/>
    </location>
</feature>
<feature type="active site" description="Proton donor/acceptor" evidence="1">
    <location>
        <position position="269"/>
    </location>
</feature>
<feature type="binding site" evidence="1">
    <location>
        <position position="15"/>
    </location>
    <ligand>
        <name>substrate</name>
    </ligand>
</feature>
<feature type="binding site" evidence="1">
    <location>
        <position position="75"/>
    </location>
    <ligand>
        <name>substrate</name>
    </ligand>
</feature>
<feature type="binding site" evidence="1">
    <location>
        <position position="134"/>
    </location>
    <ligand>
        <name>NAD(+)</name>
        <dbReference type="ChEBI" id="CHEBI:57540"/>
    </ligand>
</feature>
<feature type="binding site" evidence="1">
    <location>
        <begin position="178"/>
        <end position="179"/>
    </location>
    <ligand>
        <name>NAD(+)</name>
        <dbReference type="ChEBI" id="CHEBI:57540"/>
    </ligand>
</feature>
<feature type="binding site" evidence="1">
    <location>
        <position position="198"/>
    </location>
    <ligand>
        <name>NAD(+)</name>
        <dbReference type="ChEBI" id="CHEBI:57540"/>
    </ligand>
</feature>
<feature type="binding site" evidence="1">
    <location>
        <position position="220"/>
    </location>
    <ligand>
        <name>NAD(+)</name>
        <dbReference type="ChEBI" id="CHEBI:57540"/>
    </ligand>
</feature>
<feature type="binding site" evidence="1">
    <location>
        <begin position="239"/>
        <end position="240"/>
    </location>
    <ligand>
        <name>NAD(+)</name>
        <dbReference type="ChEBI" id="CHEBI:57540"/>
    </ligand>
</feature>
<feature type="binding site" evidence="1">
    <location>
        <begin position="266"/>
        <end position="269"/>
    </location>
    <ligand>
        <name>NAD(+)</name>
        <dbReference type="ChEBI" id="CHEBI:57540"/>
    </ligand>
</feature>
<feature type="binding site" evidence="1">
    <location>
        <position position="279"/>
    </location>
    <ligand>
        <name>NAD(+)</name>
        <dbReference type="ChEBI" id="CHEBI:57540"/>
    </ligand>
</feature>
<feature type="binding site" evidence="1">
    <location>
        <begin position="298"/>
        <end position="301"/>
    </location>
    <ligand>
        <name>NAD(+)</name>
        <dbReference type="ChEBI" id="CHEBI:57540"/>
    </ligand>
</feature>
<organism>
    <name type="scientific">Geobacillus stearothermophilus</name>
    <name type="common">Bacillus stearothermophilus</name>
    <dbReference type="NCBI Taxonomy" id="1422"/>
    <lineage>
        <taxon>Bacteria</taxon>
        <taxon>Bacillati</taxon>
        <taxon>Bacillota</taxon>
        <taxon>Bacilli</taxon>
        <taxon>Bacillales</taxon>
        <taxon>Anoxybacillaceae</taxon>
        <taxon>Geobacillus</taxon>
    </lineage>
</organism>
<gene>
    <name type="primary">ald</name>
</gene>
<name>DHA_GEOSE</name>